<sequence>MLRPKALTQVLSQANTGGVQSTLLLNNEGSLLAYSGYGDTDARVTAAIASNIWAAYDRNGNQAFNEDNLKFILMDCMEGRVAITRVANLLLCMYAKETVGFGMLKAKAQALVQYLEEPLTQVAAS</sequence>
<feature type="chain" id="PRO_0000240660" description="Ragulator complex protein LAMTOR2">
    <location>
        <begin position="1"/>
        <end position="125"/>
    </location>
</feature>
<feature type="region of interest" description="Required for location at endosomes" evidence="1">
    <location>
        <begin position="57"/>
        <end position="70"/>
    </location>
</feature>
<organism>
    <name type="scientific">Bos taurus</name>
    <name type="common">Bovine</name>
    <dbReference type="NCBI Taxonomy" id="9913"/>
    <lineage>
        <taxon>Eukaryota</taxon>
        <taxon>Metazoa</taxon>
        <taxon>Chordata</taxon>
        <taxon>Craniata</taxon>
        <taxon>Vertebrata</taxon>
        <taxon>Euteleostomi</taxon>
        <taxon>Mammalia</taxon>
        <taxon>Eutheria</taxon>
        <taxon>Laurasiatheria</taxon>
        <taxon>Artiodactyla</taxon>
        <taxon>Ruminantia</taxon>
        <taxon>Pecora</taxon>
        <taxon>Bovidae</taxon>
        <taxon>Bovinae</taxon>
        <taxon>Bos</taxon>
    </lineage>
</organism>
<protein>
    <recommendedName>
        <fullName>Ragulator complex protein LAMTOR2</fullName>
    </recommendedName>
    <alternativeName>
        <fullName>Late endosomal/lysosomal adaptor and MAPK and MTOR activator 2</fullName>
    </alternativeName>
</protein>
<keyword id="KW-0967">Endosome</keyword>
<keyword id="KW-0458">Lysosome</keyword>
<keyword id="KW-0472">Membrane</keyword>
<keyword id="KW-1185">Reference proteome</keyword>
<proteinExistence type="evidence at transcript level"/>
<comment type="function">
    <text evidence="2 3">As part of the Ragulator complex it is involved in amino acid sensing and activation of mTORC1, a signaling complex promoting cell growth in response to growth factors, energy levels, and amino acids. Activated by amino acids through a mechanism involving the lysosomal V-ATPase, the Ragulator plays a dual role for the small GTPases Rag (RagA/RRAGA, RagB/RRAGB, RagC/RRAGC and/or RagD/RRAGD): it (1) acts as a guanine nucleotide exchange factor (GEF), activating the small GTPases Rag and (2) mediates recruitment of Rag GTPases to the lysosome membrane. Activated Ragulator and Rag GTPases function as a scaffold recruiting mTORC1 to lysosomes where it is in turn activated (By similarity). Adapter protein that enhances the efficiency of the MAP kinase cascade facilitating the activation of MAPK2 (By similarity).</text>
</comment>
<comment type="subunit">
    <text evidence="2 3">Part of the Ragulator complex composed of LAMTOR1, LAMTOR2, LAMTOR3, LAMTOR4 and LAMTOR5. LAMTOR4 and LAMTOR5 form a heterodimer that interacts, through LAMTOR1, with a LAMTOR2, LAMTOR3 heterodimer. Interacts with LAMTOR1 and LAMTOR3; the interaction is direct. The Ragulator complex interacts with both the mTORC1 complex and heterodimers constituted of the Rag GTPases RagA/RRAGA, RagB/RRAGB, RagC/RRAGC and RagD/RRAGD; regulated by amino acid availability. The Ragulator complex interacts with SLC38A9; the probable amino acid sensor (By similarity). Interacts with MAPK1 and MAP2K1 (By similarity). Component of the lysosomal folliculin complex (LFC), composed of FLCN, FNIP1 (or FNIP2), RagA/RRAGA or RagB/RRAGB GDP-bound, RagC/RRAGC or RagD/RRAGD GTP-bound, and Ragulator (By similarity).</text>
</comment>
<comment type="subcellular location">
    <subcellularLocation>
        <location evidence="2">Late endosome membrane</location>
        <topology evidence="2">Peripheral membrane protein</topology>
        <orientation evidence="2">Cytoplasmic side</orientation>
    </subcellularLocation>
    <subcellularLocation>
        <location evidence="2">Lysosome membrane</location>
        <topology evidence="2">Peripheral membrane protein</topology>
        <orientation evidence="2">Cytoplasmic side</orientation>
    </subcellularLocation>
    <text evidence="2">Recruited to lysosome and endosome membranes by LAMTOR1.</text>
</comment>
<comment type="similarity">
    <text evidence="4">Belongs to the GAMAD family.</text>
</comment>
<name>LTOR2_BOVIN</name>
<gene>
    <name type="primary">LAMTOR2</name>
</gene>
<evidence type="ECO:0000250" key="1"/>
<evidence type="ECO:0000250" key="2">
    <source>
        <dbReference type="UniProtKB" id="Q9JHS3"/>
    </source>
</evidence>
<evidence type="ECO:0000250" key="3">
    <source>
        <dbReference type="UniProtKB" id="Q9Y2Q5"/>
    </source>
</evidence>
<evidence type="ECO:0000305" key="4"/>
<dbReference type="EMBL" id="BC102146">
    <property type="protein sequence ID" value="AAI02147.1"/>
    <property type="molecule type" value="mRNA"/>
</dbReference>
<dbReference type="RefSeq" id="NP_001029963.1">
    <property type="nucleotide sequence ID" value="NM_001034791.1"/>
</dbReference>
<dbReference type="BMRB" id="Q3T132"/>
<dbReference type="SMR" id="Q3T132"/>
<dbReference type="FunCoup" id="Q3T132">
    <property type="interactions" value="1480"/>
</dbReference>
<dbReference type="STRING" id="9913.ENSBTAP00000045185"/>
<dbReference type="PaxDb" id="9913-ENSBTAP00000045185"/>
<dbReference type="Ensembl" id="ENSBTAT00000048084.3">
    <property type="protein sequence ID" value="ENSBTAP00000045185.1"/>
    <property type="gene ID" value="ENSBTAG00000011754.6"/>
</dbReference>
<dbReference type="GeneID" id="616375"/>
<dbReference type="KEGG" id="bta:616375"/>
<dbReference type="CTD" id="28956"/>
<dbReference type="VEuPathDB" id="HostDB:ENSBTAG00000011754"/>
<dbReference type="VGNC" id="VGNC:30780">
    <property type="gene designation" value="LAMTOR2"/>
</dbReference>
<dbReference type="eggNOG" id="KOG4107">
    <property type="taxonomic scope" value="Eukaryota"/>
</dbReference>
<dbReference type="GeneTree" id="ENSGT00390000006100"/>
<dbReference type="HOGENOM" id="CLU_141118_0_0_1"/>
<dbReference type="InParanoid" id="Q3T132"/>
<dbReference type="OMA" id="WAAYEKN"/>
<dbReference type="OrthoDB" id="271745at2759"/>
<dbReference type="TreeFam" id="TF313929"/>
<dbReference type="Reactome" id="R-BTA-1632852">
    <property type="pathway name" value="Macroautophagy"/>
</dbReference>
<dbReference type="Reactome" id="R-BTA-165159">
    <property type="pathway name" value="MTOR signalling"/>
</dbReference>
<dbReference type="Reactome" id="R-BTA-166208">
    <property type="pathway name" value="mTORC1-mediated signalling"/>
</dbReference>
<dbReference type="Reactome" id="R-BTA-380972">
    <property type="pathway name" value="Energy dependent regulation of mTOR by LKB1-AMPK"/>
</dbReference>
<dbReference type="Reactome" id="R-BTA-5628897">
    <property type="pathway name" value="TP53 Regulates Metabolic Genes"/>
</dbReference>
<dbReference type="Reactome" id="R-BTA-5674135">
    <property type="pathway name" value="MAP2K and MAPK activation"/>
</dbReference>
<dbReference type="Reactome" id="R-BTA-6798695">
    <property type="pathway name" value="Neutrophil degranulation"/>
</dbReference>
<dbReference type="Reactome" id="R-BTA-8943724">
    <property type="pathway name" value="Regulation of PTEN gene transcription"/>
</dbReference>
<dbReference type="Reactome" id="R-BTA-9639288">
    <property type="pathway name" value="Amino acids regulate mTORC1"/>
</dbReference>
<dbReference type="Proteomes" id="UP000009136">
    <property type="component" value="Chromosome 3"/>
</dbReference>
<dbReference type="Bgee" id="ENSBTAG00000011754">
    <property type="expression patterns" value="Expressed in oocyte and 104 other cell types or tissues"/>
</dbReference>
<dbReference type="GO" id="GO:1990877">
    <property type="term" value="C:FNIP-folliculin RagC/D GAP"/>
    <property type="evidence" value="ECO:0007669"/>
    <property type="project" value="Ensembl"/>
</dbReference>
<dbReference type="GO" id="GO:0005770">
    <property type="term" value="C:late endosome"/>
    <property type="evidence" value="ECO:0000250"/>
    <property type="project" value="UniProtKB"/>
</dbReference>
<dbReference type="GO" id="GO:0031902">
    <property type="term" value="C:late endosome membrane"/>
    <property type="evidence" value="ECO:0007669"/>
    <property type="project" value="UniProtKB-SubCell"/>
</dbReference>
<dbReference type="GO" id="GO:0005765">
    <property type="term" value="C:lysosomal membrane"/>
    <property type="evidence" value="ECO:0000250"/>
    <property type="project" value="UniProtKB"/>
</dbReference>
<dbReference type="GO" id="GO:0071986">
    <property type="term" value="C:Ragulator complex"/>
    <property type="evidence" value="ECO:0000250"/>
    <property type="project" value="UniProtKB"/>
</dbReference>
<dbReference type="GO" id="GO:0005085">
    <property type="term" value="F:guanyl-nucleotide exchange factor activity"/>
    <property type="evidence" value="ECO:0007669"/>
    <property type="project" value="Ensembl"/>
</dbReference>
<dbReference type="GO" id="GO:0060090">
    <property type="term" value="F:molecular adaptor activity"/>
    <property type="evidence" value="ECO:0007669"/>
    <property type="project" value="Ensembl"/>
</dbReference>
<dbReference type="GO" id="GO:0071230">
    <property type="term" value="P:cellular response to amino acid stimulus"/>
    <property type="evidence" value="ECO:0000250"/>
    <property type="project" value="UniProtKB"/>
</dbReference>
<dbReference type="GO" id="GO:0010761">
    <property type="term" value="P:fibroblast migration"/>
    <property type="evidence" value="ECO:0007669"/>
    <property type="project" value="Ensembl"/>
</dbReference>
<dbReference type="GO" id="GO:0043410">
    <property type="term" value="P:positive regulation of MAPK cascade"/>
    <property type="evidence" value="ECO:0007669"/>
    <property type="project" value="Ensembl"/>
</dbReference>
<dbReference type="GO" id="GO:0032008">
    <property type="term" value="P:positive regulation of TOR signaling"/>
    <property type="evidence" value="ECO:0000250"/>
    <property type="project" value="UniProtKB"/>
</dbReference>
<dbReference type="GO" id="GO:1904263">
    <property type="term" value="P:positive regulation of TORC1 signaling"/>
    <property type="evidence" value="ECO:0000250"/>
    <property type="project" value="UniProtKB"/>
</dbReference>
<dbReference type="GO" id="GO:0008104">
    <property type="term" value="P:protein localization"/>
    <property type="evidence" value="ECO:0000250"/>
    <property type="project" value="UniProtKB"/>
</dbReference>
<dbReference type="GO" id="GO:1902414">
    <property type="term" value="P:protein localization to cell junction"/>
    <property type="evidence" value="ECO:0007669"/>
    <property type="project" value="Ensembl"/>
</dbReference>
<dbReference type="GO" id="GO:0001558">
    <property type="term" value="P:regulation of cell growth"/>
    <property type="evidence" value="ECO:0000250"/>
    <property type="project" value="UniProtKB"/>
</dbReference>
<dbReference type="GO" id="GO:0150116">
    <property type="term" value="P:regulation of cell-substrate junction organization"/>
    <property type="evidence" value="ECO:0007669"/>
    <property type="project" value="Ensembl"/>
</dbReference>
<dbReference type="FunFam" id="3.30.450.30:FF:000004">
    <property type="entry name" value="ragulator complex protein LAMTOR2"/>
    <property type="match status" value="1"/>
</dbReference>
<dbReference type="Gene3D" id="3.30.450.30">
    <property type="entry name" value="Dynein light chain 2a, cytoplasmic"/>
    <property type="match status" value="1"/>
</dbReference>
<dbReference type="InterPro" id="IPR037587">
    <property type="entry name" value="LAMTOR2-like"/>
</dbReference>
<dbReference type="InterPro" id="IPR004942">
    <property type="entry name" value="Roadblock/LAMTOR2_dom"/>
</dbReference>
<dbReference type="PANTHER" id="PTHR13323">
    <property type="entry name" value="LATE ENDOSOMAL/LYSOSOMAL MP1 INTERACTING PROTEIN"/>
    <property type="match status" value="1"/>
</dbReference>
<dbReference type="Pfam" id="PF03259">
    <property type="entry name" value="Robl_LC7"/>
    <property type="match status" value="1"/>
</dbReference>
<dbReference type="SMART" id="SM00960">
    <property type="entry name" value="Robl_LC7"/>
    <property type="match status" value="1"/>
</dbReference>
<dbReference type="SUPFAM" id="SSF103196">
    <property type="entry name" value="Roadblock/LC7 domain"/>
    <property type="match status" value="1"/>
</dbReference>
<reference key="1">
    <citation type="submission" date="2005-08" db="EMBL/GenBank/DDBJ databases">
        <authorList>
            <consortium name="NIH - Mammalian Gene Collection (MGC) project"/>
        </authorList>
    </citation>
    <scope>NUCLEOTIDE SEQUENCE [LARGE SCALE MRNA]</scope>
    <source>
        <strain>Crossbred X Angus</strain>
        <tissue>Ileum</tissue>
    </source>
</reference>
<accession>Q3T132</accession>